<accession>Q2TZ06</accession>
<proteinExistence type="inferred from homology"/>
<feature type="chain" id="PRO_0000333429" description="Protein sip5">
    <location>
        <begin position="1"/>
        <end position="819"/>
    </location>
</feature>
<feature type="region of interest" description="Disordered" evidence="2">
    <location>
        <begin position="1"/>
        <end position="78"/>
    </location>
</feature>
<feature type="region of interest" description="Disordered" evidence="2">
    <location>
        <begin position="157"/>
        <end position="265"/>
    </location>
</feature>
<feature type="region of interest" description="Disordered" evidence="2">
    <location>
        <begin position="317"/>
        <end position="345"/>
    </location>
</feature>
<feature type="region of interest" description="Disordered" evidence="2">
    <location>
        <begin position="478"/>
        <end position="497"/>
    </location>
</feature>
<feature type="region of interest" description="Disordered" evidence="2">
    <location>
        <begin position="513"/>
        <end position="534"/>
    </location>
</feature>
<feature type="region of interest" description="Disordered" evidence="2">
    <location>
        <begin position="556"/>
        <end position="779"/>
    </location>
</feature>
<feature type="region of interest" description="Disordered" evidence="2">
    <location>
        <begin position="792"/>
        <end position="819"/>
    </location>
</feature>
<feature type="compositionally biased region" description="Basic and acidic residues" evidence="2">
    <location>
        <begin position="29"/>
        <end position="39"/>
    </location>
</feature>
<feature type="compositionally biased region" description="Basic and acidic residues" evidence="2">
    <location>
        <begin position="57"/>
        <end position="78"/>
    </location>
</feature>
<feature type="compositionally biased region" description="Basic and acidic residues" evidence="2">
    <location>
        <begin position="168"/>
        <end position="185"/>
    </location>
</feature>
<feature type="compositionally biased region" description="Low complexity" evidence="2">
    <location>
        <begin position="198"/>
        <end position="211"/>
    </location>
</feature>
<feature type="compositionally biased region" description="Polar residues" evidence="2">
    <location>
        <begin position="212"/>
        <end position="233"/>
    </location>
</feature>
<feature type="compositionally biased region" description="Basic and acidic residues" evidence="2">
    <location>
        <begin position="317"/>
        <end position="326"/>
    </location>
</feature>
<feature type="compositionally biased region" description="Low complexity" evidence="2">
    <location>
        <begin position="327"/>
        <end position="344"/>
    </location>
</feature>
<feature type="compositionally biased region" description="Polar residues" evidence="2">
    <location>
        <begin position="487"/>
        <end position="497"/>
    </location>
</feature>
<feature type="compositionally biased region" description="Basic and acidic residues" evidence="2">
    <location>
        <begin position="556"/>
        <end position="585"/>
    </location>
</feature>
<feature type="compositionally biased region" description="Polar residues" evidence="2">
    <location>
        <begin position="641"/>
        <end position="651"/>
    </location>
</feature>
<feature type="compositionally biased region" description="Polar residues" evidence="2">
    <location>
        <begin position="662"/>
        <end position="679"/>
    </location>
</feature>
<feature type="compositionally biased region" description="Low complexity" evidence="2">
    <location>
        <begin position="691"/>
        <end position="720"/>
    </location>
</feature>
<feature type="compositionally biased region" description="Basic and acidic residues" evidence="2">
    <location>
        <begin position="734"/>
        <end position="746"/>
    </location>
</feature>
<feature type="compositionally biased region" description="Polar residues" evidence="2">
    <location>
        <begin position="747"/>
        <end position="760"/>
    </location>
</feature>
<feature type="compositionally biased region" description="Polar residues" evidence="2">
    <location>
        <begin position="808"/>
        <end position="819"/>
    </location>
</feature>
<dbReference type="EMBL" id="BA000056">
    <property type="protein sequence ID" value="BAE65517.1"/>
    <property type="molecule type" value="Genomic_DNA"/>
</dbReference>
<dbReference type="RefSeq" id="XP_001826650.1">
    <property type="nucleotide sequence ID" value="XM_001826598.2"/>
</dbReference>
<dbReference type="SMR" id="Q2TZ06"/>
<dbReference type="STRING" id="510516.Q2TZ06"/>
<dbReference type="EnsemblFungi" id="BAE65517">
    <property type="protein sequence ID" value="BAE65517"/>
    <property type="gene ID" value="AO090103000033"/>
</dbReference>
<dbReference type="GeneID" id="5998772"/>
<dbReference type="KEGG" id="aor:AO090103000033"/>
<dbReference type="VEuPathDB" id="FungiDB:AO090103000033"/>
<dbReference type="HOGENOM" id="CLU_009068_1_0_1"/>
<dbReference type="OMA" id="CFLTYPP"/>
<dbReference type="OrthoDB" id="115501at5052"/>
<dbReference type="Proteomes" id="UP000006564">
    <property type="component" value="Chromosome 8"/>
</dbReference>
<dbReference type="GO" id="GO:0005737">
    <property type="term" value="C:cytoplasm"/>
    <property type="evidence" value="ECO:0007669"/>
    <property type="project" value="UniProtKB-SubCell"/>
</dbReference>
<dbReference type="CDD" id="cd24139">
    <property type="entry name" value="SIP5-like"/>
    <property type="match status" value="1"/>
</dbReference>
<dbReference type="InterPro" id="IPR039301">
    <property type="entry name" value="Sip5/DA2"/>
</dbReference>
<dbReference type="PANTHER" id="PTHR31315">
    <property type="entry name" value="PROTEIN SIP5"/>
    <property type="match status" value="1"/>
</dbReference>
<dbReference type="PANTHER" id="PTHR31315:SF1">
    <property type="entry name" value="PROTEIN SIP5"/>
    <property type="match status" value="1"/>
</dbReference>
<name>SIP5_ASPOR</name>
<gene>
    <name type="primary">sip5</name>
    <name type="ORF">AO090103000033</name>
</gene>
<keyword id="KW-0963">Cytoplasm</keyword>
<keyword id="KW-1185">Reference proteome</keyword>
<sequence length="819" mass="88350">MGNSQTKEARPPFTPNRRSHGGGHGRSPYGDRHHSEGSRSTRGSRPDLSILGIGGSSERDVATLEHRRETKQEREARRLERERVARIKERERSMREEHVDGGYLVTQGVYTGTEDFNKAVVRQLMIERRLAPFWRGLNDFSDSWTEHQLMAAARGLPIPPPDEIPSELEYKNPPKITEGAKESTDTKGIQHLTVPITSRSQSYGSDASQSSTPAHSLPSPTSPLASGTSSSPLFRTRAKTLASLTTSKHGTQADPAPREIQLPRDPFVNGQPIEAYLYKDAAECPICFLYYPPYLNRTRCCDQPICSECFVQIKRPDPHPPEHGDSDPNAPAAAAEGDAADNQDSQLVSEPAACPFCVQPEFGVTYAPPPFRRGLTYASDPSARPNFTSPVSSTSSLSSGNVTAVTGRRRAASLSANDPTVITTDKVRPDWAQKLANARAHAARRSAAATALHTAAYLMNSNGNGGDSRTFNIGRRGVMRRAGGSDPHSSSSRTGSPALQALAFLTDRRSATNDMDSAEEGSGNIAPPRNTSRRNRIDDLEEMMMMEAIRLSLASEEERRKREEKEAKKEAKKREKEAKKAEKTARKTGLYSTNASGSALDVPTGLGRVASSSSSVIGEESTPAGKGKEVDRASPEAPIDATSTCSVTAPASMNAVYPPMNSADQHQSMQSSVPQTSPRELSKPSHLRHVSSASSSFSSLVESMSGDHTGTTEGNGSSTEPLFNFRSLAAVIGDEDKREESAEHVENTLSNPQAEGSASRSVLPVDHAHTDDSVFNADAATPAGSDFALQESQGYMIPKELETRSVEITDSTGNPQATS</sequence>
<reference key="1">
    <citation type="journal article" date="2005" name="Nature">
        <title>Genome sequencing and analysis of Aspergillus oryzae.</title>
        <authorList>
            <person name="Machida M."/>
            <person name="Asai K."/>
            <person name="Sano M."/>
            <person name="Tanaka T."/>
            <person name="Kumagai T."/>
            <person name="Terai G."/>
            <person name="Kusumoto K."/>
            <person name="Arima T."/>
            <person name="Akita O."/>
            <person name="Kashiwagi Y."/>
            <person name="Abe K."/>
            <person name="Gomi K."/>
            <person name="Horiuchi H."/>
            <person name="Kitamoto K."/>
            <person name="Kobayashi T."/>
            <person name="Takeuchi M."/>
            <person name="Denning D.W."/>
            <person name="Galagan J.E."/>
            <person name="Nierman W.C."/>
            <person name="Yu J."/>
            <person name="Archer D.B."/>
            <person name="Bennett J.W."/>
            <person name="Bhatnagar D."/>
            <person name="Cleveland T.E."/>
            <person name="Fedorova N.D."/>
            <person name="Gotoh O."/>
            <person name="Horikawa H."/>
            <person name="Hosoyama A."/>
            <person name="Ichinomiya M."/>
            <person name="Igarashi R."/>
            <person name="Iwashita K."/>
            <person name="Juvvadi P.R."/>
            <person name="Kato M."/>
            <person name="Kato Y."/>
            <person name="Kin T."/>
            <person name="Kokubun A."/>
            <person name="Maeda H."/>
            <person name="Maeyama N."/>
            <person name="Maruyama J."/>
            <person name="Nagasaki H."/>
            <person name="Nakajima T."/>
            <person name="Oda K."/>
            <person name="Okada K."/>
            <person name="Paulsen I."/>
            <person name="Sakamoto K."/>
            <person name="Sawano T."/>
            <person name="Takahashi M."/>
            <person name="Takase K."/>
            <person name="Terabayashi Y."/>
            <person name="Wortman J.R."/>
            <person name="Yamada O."/>
            <person name="Yamagata Y."/>
            <person name="Anazawa H."/>
            <person name="Hata Y."/>
            <person name="Koide Y."/>
            <person name="Komori T."/>
            <person name="Koyama Y."/>
            <person name="Minetoki T."/>
            <person name="Suharnan S."/>
            <person name="Tanaka A."/>
            <person name="Isono K."/>
            <person name="Kuhara S."/>
            <person name="Ogasawara N."/>
            <person name="Kikuchi H."/>
        </authorList>
    </citation>
    <scope>NUCLEOTIDE SEQUENCE [LARGE SCALE GENOMIC DNA]</scope>
    <source>
        <strain>ATCC 42149 / RIB 40</strain>
    </source>
</reference>
<comment type="function">
    <text evidence="1">May negatively regulate the snf1 kinase.</text>
</comment>
<comment type="subcellular location">
    <subcellularLocation>
        <location evidence="1">Cytoplasm</location>
    </subcellularLocation>
</comment>
<comment type="similarity">
    <text evidence="3">Belongs to the SIP5 family.</text>
</comment>
<evidence type="ECO:0000250" key="1"/>
<evidence type="ECO:0000256" key="2">
    <source>
        <dbReference type="SAM" id="MobiDB-lite"/>
    </source>
</evidence>
<evidence type="ECO:0000305" key="3"/>
<protein>
    <recommendedName>
        <fullName>Protein sip5</fullName>
    </recommendedName>
</protein>
<organism>
    <name type="scientific">Aspergillus oryzae (strain ATCC 42149 / RIB 40)</name>
    <name type="common">Yellow koji mold</name>
    <dbReference type="NCBI Taxonomy" id="510516"/>
    <lineage>
        <taxon>Eukaryota</taxon>
        <taxon>Fungi</taxon>
        <taxon>Dikarya</taxon>
        <taxon>Ascomycota</taxon>
        <taxon>Pezizomycotina</taxon>
        <taxon>Eurotiomycetes</taxon>
        <taxon>Eurotiomycetidae</taxon>
        <taxon>Eurotiales</taxon>
        <taxon>Aspergillaceae</taxon>
        <taxon>Aspergillus</taxon>
        <taxon>Aspergillus subgen. Circumdati</taxon>
    </lineage>
</organism>